<reference key="1">
    <citation type="submission" date="2005-08" db="EMBL/GenBank/DDBJ databases">
        <authorList>
            <consortium name="NIH - Mammalian Gene Collection (MGC) project"/>
        </authorList>
    </citation>
    <scope>NUCLEOTIDE SEQUENCE [LARGE SCALE MRNA]</scope>
    <source>
        <strain>Crossbred X Angus</strain>
        <tissue>Ileum</tissue>
    </source>
</reference>
<gene>
    <name type="primary">FIS1</name>
</gene>
<evidence type="ECO:0000250" key="1">
    <source>
        <dbReference type="UniProtKB" id="Q9Y3D6"/>
    </source>
</evidence>
<evidence type="ECO:0000255" key="2"/>
<evidence type="ECO:0000305" key="3"/>
<feature type="chain" id="PRO_0000232436" description="Mitochondrial fission 1 protein">
    <location>
        <begin position="1"/>
        <end position="152"/>
    </location>
</feature>
<feature type="topological domain" description="Cytoplasmic" evidence="2">
    <location>
        <begin position="1"/>
        <end position="122"/>
    </location>
</feature>
<feature type="transmembrane region" description="Helical" evidence="2">
    <location>
        <begin position="123"/>
        <end position="143"/>
    </location>
</feature>
<feature type="topological domain" description="Mitochondrial intermembrane" evidence="2">
    <location>
        <begin position="144"/>
        <end position="152"/>
    </location>
</feature>
<feature type="repeat" description="TPR">
    <location>
        <begin position="71"/>
        <end position="104"/>
    </location>
</feature>
<feature type="modified residue" description="N-acetylmethionine" evidence="1">
    <location>
        <position position="1"/>
    </location>
</feature>
<feature type="modified residue" description="Phosphoserine" evidence="1">
    <location>
        <position position="10"/>
    </location>
</feature>
<sequence length="152" mass="16938">MEAVLNELVSVEDLLKFERKFKSEKAAGSVSKSTQFEYAWCLVRSKYNDDIRKGLALLEELLPKGSKEEQRDYVFYLAVGNYRLKEYEKALKYVRGLLQTEPQNNQAKELERLIDKAMKKDGLVGMAIVGGMALGVAGLAGLIGLAVSKSKS</sequence>
<name>FIS1_BOVIN</name>
<accession>Q3T0I5</accession>
<comment type="function">
    <text evidence="1">Involved in the fragmentation of the mitochondrial network and its perinuclear clustering. Plays a minor role in the recruitment and association of the fission mediator dynamin-related protein 1 (DNM1L) to the mitochondrial surface and mitochondrial fission. May not be essential for the assembly of functional fission complexes and the subsequent membrane scission event. Also mediates peroxisomal fission. May act when the products of fission are directed toward mitochondrial homeostasis, mitophagy, or apoptosis. Can induce cytochrome c release from the mitochondrion to the cytosol, ultimately leading to apoptosis.</text>
</comment>
<comment type="subunit">
    <text evidence="1">Interacts with DNM1L/DLP1 through the TPR region; may form part of a larger protein complex at the endoplasmic reticulum-mitochondrial interface during mitochondrial fission. Interacts with MARCHF5. Interacts with MIEF1. Interacts with PEX11A, PEX11B and PEX11G.</text>
</comment>
<comment type="subcellular location">
    <subcellularLocation>
        <location evidence="1">Mitochondrion outer membrane</location>
        <topology evidence="1">Single-pass membrane protein</topology>
    </subcellularLocation>
    <subcellularLocation>
        <location evidence="1">Peroxisome membrane</location>
        <topology evidence="1">Single-pass membrane protein</topology>
    </subcellularLocation>
</comment>
<comment type="domain">
    <text evidence="1">The C-terminus is required for mitochondrial or peroxisomal localization, while the N-terminus is necessary for mitochondrial or peroxisomal fission, localization and regulation of the interaction with DNM1L.</text>
</comment>
<comment type="PTM">
    <text evidence="1">Ubiquitinated by MARCHF5.</text>
</comment>
<comment type="similarity">
    <text evidence="3">Belongs to the FIS1 family.</text>
</comment>
<keyword id="KW-0007">Acetylation</keyword>
<keyword id="KW-0053">Apoptosis</keyword>
<keyword id="KW-0472">Membrane</keyword>
<keyword id="KW-0496">Mitochondrion</keyword>
<keyword id="KW-1000">Mitochondrion outer membrane</keyword>
<keyword id="KW-0576">Peroxisome</keyword>
<keyword id="KW-0597">Phosphoprotein</keyword>
<keyword id="KW-1185">Reference proteome</keyword>
<keyword id="KW-0802">TPR repeat</keyword>
<keyword id="KW-0812">Transmembrane</keyword>
<keyword id="KW-1133">Transmembrane helix</keyword>
<keyword id="KW-0832">Ubl conjugation</keyword>
<proteinExistence type="evidence at transcript level"/>
<dbReference type="EMBL" id="BC102383">
    <property type="protein sequence ID" value="AAI02384.1"/>
    <property type="molecule type" value="mRNA"/>
</dbReference>
<dbReference type="RefSeq" id="NP_001029956.1">
    <property type="nucleotide sequence ID" value="NM_001034784.2"/>
</dbReference>
<dbReference type="SMR" id="Q3T0I5"/>
<dbReference type="FunCoup" id="Q3T0I5">
    <property type="interactions" value="3021"/>
</dbReference>
<dbReference type="STRING" id="9913.ENSBTAP00000068143"/>
<dbReference type="PaxDb" id="9913-ENSBTAP00000010389"/>
<dbReference type="PeptideAtlas" id="Q3T0I5"/>
<dbReference type="GeneID" id="615565"/>
<dbReference type="KEGG" id="bta:615565"/>
<dbReference type="CTD" id="51024"/>
<dbReference type="VEuPathDB" id="HostDB:ENSBTAG00000007900"/>
<dbReference type="eggNOG" id="KOG3364">
    <property type="taxonomic scope" value="Eukaryota"/>
</dbReference>
<dbReference type="HOGENOM" id="CLU_104368_1_0_1"/>
<dbReference type="InParanoid" id="Q3T0I5"/>
<dbReference type="OMA" id="QFNYAWG"/>
<dbReference type="OrthoDB" id="421154at2759"/>
<dbReference type="TreeFam" id="TF315180"/>
<dbReference type="Reactome" id="R-BTA-9603798">
    <property type="pathway name" value="Class I peroxisomal membrane protein import"/>
</dbReference>
<dbReference type="Proteomes" id="UP000009136">
    <property type="component" value="Chromosome 25"/>
</dbReference>
<dbReference type="Bgee" id="ENSBTAG00000007900">
    <property type="expression patterns" value="Expressed in pons and 105 other cell types or tissues"/>
</dbReference>
<dbReference type="GO" id="GO:0005741">
    <property type="term" value="C:mitochondrial outer membrane"/>
    <property type="evidence" value="ECO:0000318"/>
    <property type="project" value="GO_Central"/>
</dbReference>
<dbReference type="GO" id="GO:0005778">
    <property type="term" value="C:peroxisomal membrane"/>
    <property type="evidence" value="ECO:0000318"/>
    <property type="project" value="GO_Central"/>
</dbReference>
<dbReference type="GO" id="GO:0005777">
    <property type="term" value="C:peroxisome"/>
    <property type="evidence" value="ECO:0000250"/>
    <property type="project" value="UniProtKB"/>
</dbReference>
<dbReference type="GO" id="GO:0008289">
    <property type="term" value="F:lipid binding"/>
    <property type="evidence" value="ECO:0000318"/>
    <property type="project" value="GO_Central"/>
</dbReference>
<dbReference type="GO" id="GO:0060090">
    <property type="term" value="F:molecular adaptor activity"/>
    <property type="evidence" value="ECO:0000318"/>
    <property type="project" value="GO_Central"/>
</dbReference>
<dbReference type="GO" id="GO:0006915">
    <property type="term" value="P:apoptotic process"/>
    <property type="evidence" value="ECO:0007669"/>
    <property type="project" value="UniProtKB-KW"/>
</dbReference>
<dbReference type="GO" id="GO:0000266">
    <property type="term" value="P:mitochondrial fission"/>
    <property type="evidence" value="ECO:0000250"/>
    <property type="project" value="UniProtKB"/>
</dbReference>
<dbReference type="GO" id="GO:0016559">
    <property type="term" value="P:peroxisome fission"/>
    <property type="evidence" value="ECO:0000318"/>
    <property type="project" value="GO_Central"/>
</dbReference>
<dbReference type="CDD" id="cd12212">
    <property type="entry name" value="Fis1"/>
    <property type="match status" value="1"/>
</dbReference>
<dbReference type="FunFam" id="1.25.40.10:FF:000147">
    <property type="entry name" value="Mitochondrial fission 1 protein"/>
    <property type="match status" value="1"/>
</dbReference>
<dbReference type="Gene3D" id="1.25.40.10">
    <property type="entry name" value="Tetratricopeptide repeat domain"/>
    <property type="match status" value="1"/>
</dbReference>
<dbReference type="InterPro" id="IPR016543">
    <property type="entry name" value="Fis1"/>
</dbReference>
<dbReference type="InterPro" id="IPR033745">
    <property type="entry name" value="Fis1_cytosol"/>
</dbReference>
<dbReference type="InterPro" id="IPR028061">
    <property type="entry name" value="Fis1_TPR_C"/>
</dbReference>
<dbReference type="InterPro" id="IPR028058">
    <property type="entry name" value="Fis1_TPR_N"/>
</dbReference>
<dbReference type="InterPro" id="IPR011990">
    <property type="entry name" value="TPR-like_helical_dom_sf"/>
</dbReference>
<dbReference type="PANTHER" id="PTHR13247:SF0">
    <property type="entry name" value="MITOCHONDRIAL FISSION 1 PROTEIN"/>
    <property type="match status" value="1"/>
</dbReference>
<dbReference type="PANTHER" id="PTHR13247">
    <property type="entry name" value="TETRATRICOPEPTIDE REPEAT PROTEIN 11 TPR REPEAT PROTEIN 11"/>
    <property type="match status" value="1"/>
</dbReference>
<dbReference type="Pfam" id="PF14853">
    <property type="entry name" value="Fis1_TPR_C"/>
    <property type="match status" value="1"/>
</dbReference>
<dbReference type="Pfam" id="PF14852">
    <property type="entry name" value="Fis1_TPR_N"/>
    <property type="match status" value="1"/>
</dbReference>
<dbReference type="PIRSF" id="PIRSF008835">
    <property type="entry name" value="TPR_repeat_11_Fis1"/>
    <property type="match status" value="1"/>
</dbReference>
<dbReference type="SUPFAM" id="SSF48452">
    <property type="entry name" value="TPR-like"/>
    <property type="match status" value="1"/>
</dbReference>
<organism>
    <name type="scientific">Bos taurus</name>
    <name type="common">Bovine</name>
    <dbReference type="NCBI Taxonomy" id="9913"/>
    <lineage>
        <taxon>Eukaryota</taxon>
        <taxon>Metazoa</taxon>
        <taxon>Chordata</taxon>
        <taxon>Craniata</taxon>
        <taxon>Vertebrata</taxon>
        <taxon>Euteleostomi</taxon>
        <taxon>Mammalia</taxon>
        <taxon>Eutheria</taxon>
        <taxon>Laurasiatheria</taxon>
        <taxon>Artiodactyla</taxon>
        <taxon>Ruminantia</taxon>
        <taxon>Pecora</taxon>
        <taxon>Bovidae</taxon>
        <taxon>Bovinae</taxon>
        <taxon>Bos</taxon>
    </lineage>
</organism>
<protein>
    <recommendedName>
        <fullName>Mitochondrial fission 1 protein</fullName>
    </recommendedName>
    <alternativeName>
        <fullName>Fis1 homolog</fullName>
    </alternativeName>
</protein>